<comment type="function">
    <text evidence="1">Cleaved by the protease thrombin to yield monomers which, together with fibrinogen alpha (FGA) and fibrinogen gamma (FGG), polymerize to form an insoluble fibrin matrix. Fibrin has a major function in hemostasis as one of the primary components of blood clots. In addition, functions during the early stages of wound repair to stabilize the lesion and guide cell migration during re-epithelialization. Was originally thought to be essential for platelet aggregation, based on in vitro studies using anticoagulated blood. However subsequent studies have shown that it is not absolutely required for thrombus formation in vivo. Enhances expression of SELP in activated platelets. Maternal fibrinogen is essential for successful pregnancy. Fibrin deposition is also associated with infection, where it protects against IFNG-mediated hemorrhage. May also facilitate the antibacterial immune response via both innate and T-cell mediated pathways.</text>
</comment>
<comment type="subunit">
    <text evidence="2">Heterohexamer; disulfide linked. Contains 2 sets of 3 non-identical chains (alpha, beta and gamma). The 2 heterotrimers are in head to head conformation with the N-termini in a small central domain (By similarity).</text>
</comment>
<comment type="subcellular location">
    <subcellularLocation>
        <location>Secreted</location>
    </subcellularLocation>
</comment>
<comment type="domain">
    <text evidence="2">A long coiled coil structure formed by 3 polypeptide chains connects the central nodule to the C-terminal domains (distal nodules). The long C-terminal ends of the alpha chains fold back, contributing a fourth strand to the coiled coil structure.</text>
</comment>
<comment type="PTM">
    <text>Conversion of fibrinogen to fibrin is triggered by thrombin, which cleaves fibrinopeptides A and B from alpha and beta chains, and thus exposes the N-terminal polymerization sites responsible for the formation of the soft clot.</text>
</comment>
<organism>
    <name type="scientific">Macaca fuscata fuscata</name>
    <name type="common">Japanese macaque</name>
    <dbReference type="NCBI Taxonomy" id="9543"/>
    <lineage>
        <taxon>Eukaryota</taxon>
        <taxon>Metazoa</taxon>
        <taxon>Chordata</taxon>
        <taxon>Craniata</taxon>
        <taxon>Vertebrata</taxon>
        <taxon>Euteleostomi</taxon>
        <taxon>Mammalia</taxon>
        <taxon>Eutheria</taxon>
        <taxon>Euarchontoglires</taxon>
        <taxon>Primates</taxon>
        <taxon>Haplorrhini</taxon>
        <taxon>Catarrhini</taxon>
        <taxon>Cercopithecidae</taxon>
        <taxon>Cercopithecinae</taxon>
        <taxon>Macaca</taxon>
    </lineage>
</organism>
<keyword id="KW-1064">Adaptive immunity</keyword>
<keyword id="KW-0094">Blood coagulation</keyword>
<keyword id="KW-0175">Coiled coil</keyword>
<keyword id="KW-0903">Direct protein sequencing</keyword>
<keyword id="KW-1015">Disulfide bond</keyword>
<keyword id="KW-0356">Hemostasis</keyword>
<keyword id="KW-0391">Immunity</keyword>
<keyword id="KW-0399">Innate immunity</keyword>
<keyword id="KW-0964">Secreted</keyword>
<evidence type="ECO:0000250" key="1">
    <source>
        <dbReference type="UniProtKB" id="E9PV24"/>
    </source>
</evidence>
<evidence type="ECO:0000250" key="2">
    <source>
        <dbReference type="UniProtKB" id="P02675"/>
    </source>
</evidence>
<feature type="peptide" id="PRO_0000009075" description="Fibrinopeptide B">
    <location>
        <begin position="1"/>
        <end position="9"/>
    </location>
</feature>
<feature type="non-terminal residue">
    <location>
        <position position="9"/>
    </location>
</feature>
<name>FIBB_MACFU</name>
<accession>P19345</accession>
<reference key="1">
    <citation type="journal article" date="1985" name="J. Biochem.">
        <title>Fibrinopeptides A and B of Japanese monkey (Macaca fuscata) and patas monkey (Erythrocebus patas): their amino acid sequences, restricted mutations, and a molecular phylogeny for macaques, guenons, and baboons.</title>
        <authorList>
            <person name="Nakamura S."/>
            <person name="Takenaka O."/>
            <person name="Takahashi K."/>
        </authorList>
    </citation>
    <scope>PROTEIN SEQUENCE</scope>
</reference>
<sequence length="9" mass="1038">NEESLFSGR</sequence>
<proteinExistence type="evidence at protein level"/>
<dbReference type="PIR" id="C24180">
    <property type="entry name" value="C24180"/>
</dbReference>
<dbReference type="GO" id="GO:0005576">
    <property type="term" value="C:extracellular region"/>
    <property type="evidence" value="ECO:0007669"/>
    <property type="project" value="UniProtKB-SubCell"/>
</dbReference>
<dbReference type="GO" id="GO:0002250">
    <property type="term" value="P:adaptive immune response"/>
    <property type="evidence" value="ECO:0007669"/>
    <property type="project" value="UniProtKB-KW"/>
</dbReference>
<dbReference type="GO" id="GO:0007596">
    <property type="term" value="P:blood coagulation"/>
    <property type="evidence" value="ECO:0007669"/>
    <property type="project" value="UniProtKB-KW"/>
</dbReference>
<dbReference type="GO" id="GO:0045087">
    <property type="term" value="P:innate immune response"/>
    <property type="evidence" value="ECO:0007669"/>
    <property type="project" value="UniProtKB-KW"/>
</dbReference>
<protein>
    <recommendedName>
        <fullName>Fibrinogen beta chain</fullName>
    </recommendedName>
    <component>
        <recommendedName>
            <fullName>Fibrinopeptide B</fullName>
        </recommendedName>
    </component>
</protein>
<gene>
    <name type="primary">FGB</name>
</gene>